<protein>
    <recommendedName>
        <fullName evidence="7">Iron-regulated transcriptional activator AFT1</fullName>
    </recommendedName>
    <alternativeName>
        <fullName evidence="7">Activator of iron transcription protein 1</fullName>
    </alternativeName>
</protein>
<accession>P22149</accession>
<accession>D6VU71</accession>
<accession>Q06993</accession>
<feature type="chain" id="PRO_0000064487" description="Iron-regulated transcriptional activator AFT1">
    <location>
        <begin position="1"/>
        <end position="690"/>
    </location>
</feature>
<feature type="region of interest" description="Disordered" evidence="2">
    <location>
        <begin position="1"/>
        <end position="21"/>
    </location>
</feature>
<feature type="region of interest" description="Disordered" evidence="2">
    <location>
        <begin position="148"/>
        <end position="205"/>
    </location>
</feature>
<feature type="region of interest" description="Disordered" evidence="2">
    <location>
        <begin position="335"/>
        <end position="357"/>
    </location>
</feature>
<feature type="region of interest" description="Disordered" evidence="2">
    <location>
        <begin position="612"/>
        <end position="655"/>
    </location>
</feature>
<feature type="short sequence motif" description="CDC [2Fe-2S] cluster binding motif" evidence="1">
    <location>
        <begin position="291"/>
        <end position="293"/>
    </location>
</feature>
<feature type="compositionally biased region" description="Basic residues" evidence="2">
    <location>
        <begin position="148"/>
        <end position="159"/>
    </location>
</feature>
<feature type="compositionally biased region" description="Basic and acidic residues" evidence="2">
    <location>
        <begin position="160"/>
        <end position="174"/>
    </location>
</feature>
<feature type="compositionally biased region" description="Polar residues" evidence="2">
    <location>
        <begin position="181"/>
        <end position="201"/>
    </location>
</feature>
<feature type="compositionally biased region" description="Polar residues" evidence="2">
    <location>
        <begin position="339"/>
        <end position="351"/>
    </location>
</feature>
<feature type="compositionally biased region" description="Low complexity" evidence="2">
    <location>
        <begin position="621"/>
        <end position="638"/>
    </location>
</feature>
<feature type="compositionally biased region" description="Basic and acidic residues" evidence="2">
    <location>
        <begin position="639"/>
        <end position="649"/>
    </location>
</feature>
<feature type="binding site" evidence="1">
    <location>
        <position position="110"/>
    </location>
    <ligand>
        <name>Zn(2+)</name>
        <dbReference type="ChEBI" id="CHEBI:29105"/>
        <label>1</label>
    </ligand>
</feature>
<feature type="binding site" evidence="1">
    <location>
        <position position="111"/>
    </location>
    <ligand>
        <name>DNA</name>
        <dbReference type="ChEBI" id="CHEBI:16991"/>
    </ligand>
</feature>
<feature type="binding site" evidence="1">
    <location>
        <position position="115"/>
    </location>
    <ligand>
        <name>DNA</name>
        <dbReference type="ChEBI" id="CHEBI:16991"/>
    </ligand>
</feature>
<feature type="binding site" evidence="1">
    <location>
        <position position="131"/>
    </location>
    <ligand>
        <name>DNA</name>
        <dbReference type="ChEBI" id="CHEBI:16991"/>
    </ligand>
</feature>
<feature type="binding site" evidence="1">
    <location>
        <position position="132"/>
    </location>
    <ligand>
        <name>DNA</name>
        <dbReference type="ChEBI" id="CHEBI:16991"/>
    </ligand>
</feature>
<feature type="binding site" evidence="1">
    <location>
        <position position="133"/>
    </location>
    <ligand>
        <name>DNA</name>
        <dbReference type="ChEBI" id="CHEBI:16991"/>
    </ligand>
</feature>
<feature type="binding site" evidence="1">
    <location>
        <position position="134"/>
    </location>
    <ligand>
        <name>DNA</name>
        <dbReference type="ChEBI" id="CHEBI:16991"/>
    </ligand>
</feature>
<feature type="binding site" evidence="1">
    <location>
        <position position="135"/>
    </location>
    <ligand>
        <name>DNA</name>
        <dbReference type="ChEBI" id="CHEBI:16991"/>
    </ligand>
</feature>
<feature type="binding site" evidence="1">
    <location>
        <position position="138"/>
    </location>
    <ligand>
        <name>DNA</name>
        <dbReference type="ChEBI" id="CHEBI:16991"/>
    </ligand>
</feature>
<feature type="binding site" evidence="1">
    <location>
        <position position="143"/>
    </location>
    <ligand>
        <name>Zn(2+)</name>
        <dbReference type="ChEBI" id="CHEBI:29105"/>
        <label>2</label>
    </ligand>
</feature>
<feature type="binding site" evidence="1">
    <location>
        <position position="215"/>
    </location>
    <ligand>
        <name>Zn(2+)</name>
        <dbReference type="ChEBI" id="CHEBI:29105"/>
        <label>2</label>
    </ligand>
</feature>
<feature type="binding site" evidence="1">
    <location>
        <position position="226"/>
    </location>
    <ligand>
        <name>DNA</name>
        <dbReference type="ChEBI" id="CHEBI:16991"/>
    </ligand>
</feature>
<feature type="binding site" evidence="1">
    <location>
        <position position="239"/>
    </location>
    <ligand>
        <name>Zn(2+)</name>
        <dbReference type="ChEBI" id="CHEBI:29105"/>
        <label>2</label>
    </ligand>
</feature>
<feature type="binding site" evidence="1">
    <location>
        <position position="241"/>
    </location>
    <ligand>
        <name>Zn(2+)</name>
        <dbReference type="ChEBI" id="CHEBI:29105"/>
        <label>2</label>
    </ligand>
</feature>
<feature type="binding site" evidence="1">
    <location>
        <position position="263"/>
    </location>
    <ligand>
        <name>DNA</name>
        <dbReference type="ChEBI" id="CHEBI:16991"/>
    </ligand>
</feature>
<feature type="sequence variant" description="In allele AFT1-1UP; which is constitutively activated.">
    <original>C</original>
    <variation>F</variation>
    <location>
        <position position="291"/>
    </location>
</feature>
<feature type="sequence conflict" description="In Ref. 2; CAA54586." evidence="8" ref="2">
    <original>D</original>
    <variation>H</variation>
    <location>
        <position position="8"/>
    </location>
</feature>
<feature type="sequence conflict" description="In Ref. 2; CAA54586." evidence="8" ref="2">
    <original>I</original>
    <variation>S</variation>
    <location>
        <position position="71"/>
    </location>
</feature>
<feature type="sequence conflict" description="In Ref. 2; CAA54586." evidence="8" ref="2">
    <original>A</original>
    <variation>T</variation>
    <location>
        <position position="136"/>
    </location>
</feature>
<feature type="sequence conflict" description="In Ref. 2; CAA54586." evidence="8" ref="2">
    <original>D</original>
    <variation>N</variation>
    <location>
        <position position="236"/>
    </location>
</feature>
<feature type="sequence conflict" description="In Ref. 7; CAA37215." evidence="8" ref="7">
    <original>S</original>
    <variation>L</variation>
    <location>
        <position position="329"/>
    </location>
</feature>
<feature type="sequence conflict" description="In Ref. 7; CAA37215." evidence="8" ref="7">
    <original>S</original>
    <variation>L</variation>
    <location>
        <position position="378"/>
    </location>
</feature>
<feature type="sequence conflict" description="In Ref. 2; CAA54586 and 7; CAA37215." evidence="8" ref="2 7">
    <original>D</original>
    <variation>G</variation>
    <location>
        <position position="416"/>
    </location>
</feature>
<feature type="sequence conflict" description="In Ref. 7; CAA37215." evidence="8" ref="7">
    <original>N</original>
    <variation>T</variation>
    <location>
        <position position="468"/>
    </location>
</feature>
<feature type="sequence conflict" description="In Ref. 2; CAA54586 and 7; CAA37215." evidence="8" ref="2 7">
    <original>N</original>
    <variation>S</variation>
    <location>
        <position position="507"/>
    </location>
</feature>
<feature type="sequence conflict" description="In Ref. 2; CAA54586." evidence="8" ref="2">
    <original>S</original>
    <variation>F</variation>
    <location>
        <position position="538"/>
    </location>
</feature>
<feature type="sequence conflict" description="In Ref. 7; CAA37215." evidence="8" ref="7">
    <original>S</original>
    <variation>L</variation>
    <location>
        <position position="538"/>
    </location>
</feature>
<feature type="sequence conflict" description="In Ref. 2; CAA54586 and 7; CAA37215." evidence="8" ref="2 7">
    <original>S</original>
    <variation>P</variation>
    <location>
        <position position="568"/>
    </location>
</feature>
<feature type="sequence conflict" description="In Ref. 2; CAA54586 and 7; CAA37215." evidence="8" ref="2 7">
    <original>S</original>
    <variation>T</variation>
    <location>
        <position position="579"/>
    </location>
</feature>
<feature type="sequence conflict" description="In Ref. 2; CAA54586 and 7; CAA37215." evidence="8" ref="2 7">
    <original>H</original>
    <variation>I</variation>
    <location>
        <position position="644"/>
    </location>
</feature>
<feature type="sequence conflict" description="In Ref. 2; CAA54586 and 7; CAA37215." evidence="8" ref="2 7">
    <original>H</original>
    <variation>L</variation>
    <location>
        <position position="649"/>
    </location>
</feature>
<sequence length="690" mass="77683">MEGFNPADIEHASPINSSDSHSSSFVYALPKSASEYVVNHNEGRASASGNPAAVPSPIMTLNLKSTHSLNIDQHVHTSTSPTETIGHIHHVEKLNQNNLIHLDPVPNFEDKSDIKPWLQKIFYPQGIELVIERSDAFKVVFKCKAAKRGRNARRKRKDKPKGQDHEDEKSKINDDELEYASPSNATVTNGPQTSPDQTSSIKPKKKRCVSRFNNCPFRVRATYSLKRKRWSIVVMDNNHSHQLKFNPDSEEYKKFKEKLRKDNDVDAIKKFDELEYRTLANLPIPTATIPCDCGLTNEIQSFNVVLPTNSNVTSSASSSTVSSISLDSSNASKRPCLPSVNNTGSINTNNVRKPKSQCKNKDTLLKRTTMQNFLTTKSRLRKTGTPTSSQHSSTAFSGYIDDPFNLNEILPLPASDFKLNTVTNLNEIDFTNIFTKSPHPHSGSTHPRQVFDQLDDCSSILFSPLTTNTNNEFEGESDDFVHSPYLNSEADFSQILSSAPPVHHDPNETHQENQDIIDRFANSSQEHNEYILQYLTHSDAANHNNIGVPNNNSHSLNTQHNVSDLGNSLLRQEALVGSSSTKIFDELKFVQNGPHGSQHPIDFQHVDHRHLSSNEPQVRSHQYGPQQQPPQQLQYHQNQPHDGHNHEQHQTVQKDMQTHESLEIMGNTLLEEFKDIKMVNGELKYVKPED</sequence>
<gene>
    <name evidence="7" type="primary">AFT1</name>
    <name type="synonym">RCS1</name>
    <name type="ordered locus">YGL071W</name>
</gene>
<organism>
    <name type="scientific">Saccharomyces cerevisiae (strain ATCC 204508 / S288c)</name>
    <name type="common">Baker's yeast</name>
    <dbReference type="NCBI Taxonomy" id="559292"/>
    <lineage>
        <taxon>Eukaryota</taxon>
        <taxon>Fungi</taxon>
        <taxon>Dikarya</taxon>
        <taxon>Ascomycota</taxon>
        <taxon>Saccharomycotina</taxon>
        <taxon>Saccharomycetes</taxon>
        <taxon>Saccharomycetales</taxon>
        <taxon>Saccharomycetaceae</taxon>
        <taxon>Saccharomyces</taxon>
    </lineage>
</organism>
<name>AFT1_YEAST</name>
<reference key="1">
    <citation type="journal article" date="1995" name="EMBO J.">
        <title>AFT1: a mediator of iron regulated transcriptional control in Saccharomyces cerevisiae.</title>
        <authorList>
            <person name="Yamaguchi-Iwai Y."/>
            <person name="Dancis A."/>
            <person name="Klausner R.D."/>
        </authorList>
    </citation>
    <scope>NUCLEOTIDE SEQUENCE [MRNA]</scope>
    <scope>FUNCTION</scope>
</reference>
<reference key="2">
    <citation type="journal article" date="1997" name="Yeast">
        <title>The AFT1 transcriptional factor is differentially required for expression of high-affinity iron uptake genes in Saccharomyces cerevisiae.</title>
        <authorList>
            <person name="Casas C."/>
            <person name="Aldea M."/>
            <person name="Espinet C."/>
            <person name="Gallego C."/>
            <person name="Gil R."/>
            <person name="Herrero E."/>
        </authorList>
    </citation>
    <scope>NUCLEOTIDE SEQUENCE [GENOMIC DNA]</scope>
    <scope>FUNCTION</scope>
</reference>
<reference key="3">
    <citation type="journal article" date="1997" name="Yeast">
        <title>Sequence analysis of 203 kilobases from Saccharomyces cerevisiae chromosome VII.</title>
        <authorList>
            <person name="Rieger M."/>
            <person name="Brueckner M."/>
            <person name="Schaefer M."/>
            <person name="Mueller-Auer S."/>
        </authorList>
    </citation>
    <scope>NUCLEOTIDE SEQUENCE [GENOMIC DNA]</scope>
    <source>
        <strain>ATCC 204508 / S288c</strain>
    </source>
</reference>
<reference key="4">
    <citation type="journal article" date="1997" name="Nature">
        <title>The nucleotide sequence of Saccharomyces cerevisiae chromosome VII.</title>
        <authorList>
            <person name="Tettelin H."/>
            <person name="Agostoni-Carbone M.L."/>
            <person name="Albermann K."/>
            <person name="Albers M."/>
            <person name="Arroyo J."/>
            <person name="Backes U."/>
            <person name="Barreiros T."/>
            <person name="Bertani I."/>
            <person name="Bjourson A.J."/>
            <person name="Brueckner M."/>
            <person name="Bruschi C.V."/>
            <person name="Carignani G."/>
            <person name="Castagnoli L."/>
            <person name="Cerdan E."/>
            <person name="Clemente M.L."/>
            <person name="Coblenz A."/>
            <person name="Coglievina M."/>
            <person name="Coissac E."/>
            <person name="Defoor E."/>
            <person name="Del Bino S."/>
            <person name="Delius H."/>
            <person name="Delneri D."/>
            <person name="de Wergifosse P."/>
            <person name="Dujon B."/>
            <person name="Durand P."/>
            <person name="Entian K.-D."/>
            <person name="Eraso P."/>
            <person name="Escribano V."/>
            <person name="Fabiani L."/>
            <person name="Fartmann B."/>
            <person name="Feroli F."/>
            <person name="Feuermann M."/>
            <person name="Frontali L."/>
            <person name="Garcia-Gonzalez M."/>
            <person name="Garcia-Saez M.I."/>
            <person name="Goffeau A."/>
            <person name="Guerreiro P."/>
            <person name="Hani J."/>
            <person name="Hansen M."/>
            <person name="Hebling U."/>
            <person name="Hernandez K."/>
            <person name="Heumann K."/>
            <person name="Hilger F."/>
            <person name="Hofmann B."/>
            <person name="Indge K.J."/>
            <person name="James C.M."/>
            <person name="Klima R."/>
            <person name="Koetter P."/>
            <person name="Kramer B."/>
            <person name="Kramer W."/>
            <person name="Lauquin G."/>
            <person name="Leuther H."/>
            <person name="Louis E.J."/>
            <person name="Maillier E."/>
            <person name="Marconi A."/>
            <person name="Martegani E."/>
            <person name="Mazon M.J."/>
            <person name="Mazzoni C."/>
            <person name="McReynolds A.D.K."/>
            <person name="Melchioretto P."/>
            <person name="Mewes H.-W."/>
            <person name="Minenkova O."/>
            <person name="Mueller-Auer S."/>
            <person name="Nawrocki A."/>
            <person name="Netter P."/>
            <person name="Neu R."/>
            <person name="Nombela C."/>
            <person name="Oliver S.G."/>
            <person name="Panzeri L."/>
            <person name="Paoluzi S."/>
            <person name="Plevani P."/>
            <person name="Portetelle D."/>
            <person name="Portillo F."/>
            <person name="Potier S."/>
            <person name="Purnelle B."/>
            <person name="Rieger M."/>
            <person name="Riles L."/>
            <person name="Rinaldi T."/>
            <person name="Robben J."/>
            <person name="Rodrigues-Pousada C."/>
            <person name="Rodriguez-Belmonte E."/>
            <person name="Rodriguez-Torres A.M."/>
            <person name="Rose M."/>
            <person name="Ruzzi M."/>
            <person name="Saliola M."/>
            <person name="Sanchez-Perez M."/>
            <person name="Schaefer B."/>
            <person name="Schaefer M."/>
            <person name="Scharfe M."/>
            <person name="Schmidheini T."/>
            <person name="Schreer A."/>
            <person name="Skala J."/>
            <person name="Souciet J.-L."/>
            <person name="Steensma H.Y."/>
            <person name="Talla E."/>
            <person name="Thierry A."/>
            <person name="Vandenbol M."/>
            <person name="van der Aart Q.J.M."/>
            <person name="Van Dyck L."/>
            <person name="Vanoni M."/>
            <person name="Verhasselt P."/>
            <person name="Voet M."/>
            <person name="Volckaert G."/>
            <person name="Wambutt R."/>
            <person name="Watson M.D."/>
            <person name="Weber N."/>
            <person name="Wedler E."/>
            <person name="Wedler H."/>
            <person name="Wipfli P."/>
            <person name="Wolf K."/>
            <person name="Wright L.F."/>
            <person name="Zaccaria P."/>
            <person name="Zimmermann M."/>
            <person name="Zollner A."/>
            <person name="Kleine K."/>
        </authorList>
    </citation>
    <scope>NUCLEOTIDE SEQUENCE [LARGE SCALE GENOMIC DNA]</scope>
    <source>
        <strain>ATCC 204508 / S288c</strain>
    </source>
</reference>
<reference key="5">
    <citation type="journal article" date="2014" name="G3 (Bethesda)">
        <title>The reference genome sequence of Saccharomyces cerevisiae: Then and now.</title>
        <authorList>
            <person name="Engel S.R."/>
            <person name="Dietrich F.S."/>
            <person name="Fisk D.G."/>
            <person name="Binkley G."/>
            <person name="Balakrishnan R."/>
            <person name="Costanzo M.C."/>
            <person name="Dwight S.S."/>
            <person name="Hitz B.C."/>
            <person name="Karra K."/>
            <person name="Nash R.S."/>
            <person name="Weng S."/>
            <person name="Wong E.D."/>
            <person name="Lloyd P."/>
            <person name="Skrzypek M.S."/>
            <person name="Miyasato S.R."/>
            <person name="Simison M."/>
            <person name="Cherry J.M."/>
        </authorList>
    </citation>
    <scope>GENOME REANNOTATION</scope>
    <source>
        <strain>ATCC 204508 / S288c</strain>
    </source>
</reference>
<reference key="6">
    <citation type="journal article" date="2007" name="Genome Res.">
        <title>Approaching a complete repository of sequence-verified protein-encoding clones for Saccharomyces cerevisiae.</title>
        <authorList>
            <person name="Hu Y."/>
            <person name="Rolfs A."/>
            <person name="Bhullar B."/>
            <person name="Murthy T.V.S."/>
            <person name="Zhu C."/>
            <person name="Berger M.F."/>
            <person name="Camargo A.A."/>
            <person name="Kelley F."/>
            <person name="McCarron S."/>
            <person name="Jepson D."/>
            <person name="Richardson A."/>
            <person name="Raphael J."/>
            <person name="Moreira D."/>
            <person name="Taycher E."/>
            <person name="Zuo D."/>
            <person name="Mohr S."/>
            <person name="Kane M.F."/>
            <person name="Williamson J."/>
            <person name="Simpson A.J.G."/>
            <person name="Bulyk M.L."/>
            <person name="Harlow E."/>
            <person name="Marsischky G."/>
            <person name="Kolodner R.D."/>
            <person name="LaBaer J."/>
        </authorList>
    </citation>
    <scope>NUCLEOTIDE SEQUENCE [GENOMIC DNA]</scope>
    <source>
        <strain>ATCC 204508 / S288c</strain>
    </source>
</reference>
<reference key="7">
    <citation type="journal article" date="1991" name="Yeast">
        <title>RCS1, a gene involved in controlling cell size in Saccharomyces cerevisiae.</title>
        <authorList>
            <person name="Gil R."/>
            <person name="Zueco J."/>
            <person name="Sentandreu R."/>
            <person name="Herrero E."/>
        </authorList>
    </citation>
    <scope>NUCLEOTIDE SEQUENCE OF 283-690</scope>
    <source>
        <strain>ATCC 26786 / X2180-1A</strain>
    </source>
</reference>
<reference key="8">
    <citation type="journal article" date="2003" name="Nature">
        <title>Global analysis of protein expression in yeast.</title>
        <authorList>
            <person name="Ghaemmaghami S."/>
            <person name="Huh W.-K."/>
            <person name="Bower K."/>
            <person name="Howson R.W."/>
            <person name="Belle A."/>
            <person name="Dephoure N."/>
            <person name="O'Shea E.K."/>
            <person name="Weissman J.S."/>
        </authorList>
    </citation>
    <scope>LEVEL OF PROTEIN EXPRESSION [LARGE SCALE ANALYSIS]</scope>
</reference>
<reference key="9">
    <citation type="journal article" date="2008" name="Mol. Cell. Proteomics">
        <title>A multidimensional chromatography technology for in-depth phosphoproteome analysis.</title>
        <authorList>
            <person name="Albuquerque C.P."/>
            <person name="Smolka M.B."/>
            <person name="Payne S.H."/>
            <person name="Bafna V."/>
            <person name="Eng J."/>
            <person name="Zhou H."/>
        </authorList>
    </citation>
    <scope>IDENTIFICATION BY MASS SPECTROMETRY [LARGE SCALE ANALYSIS]</scope>
</reference>
<reference key="10">
    <citation type="journal article" date="2015" name="MicrobiologyOpen">
        <title>The late-annotated small ORF LSO1 is a target gene of the iron regulon of Saccharomyces cerevisiae.</title>
        <authorList>
            <person name="An X."/>
            <person name="Zhang C."/>
            <person name="Sclafani R.A."/>
            <person name="Seligman P."/>
            <person name="Huang M."/>
        </authorList>
    </citation>
    <scope>FUNCTION</scope>
    <scope>DISRUPTION PHENOTYPE</scope>
</reference>
<keyword id="KW-0010">Activator</keyword>
<keyword id="KW-0408">Iron</keyword>
<keyword id="KW-0479">Metal-binding</keyword>
<keyword id="KW-0539">Nucleus</keyword>
<keyword id="KW-1185">Reference proteome</keyword>
<keyword id="KW-0804">Transcription</keyword>
<keyword id="KW-0805">Transcription regulation</keyword>
<keyword id="KW-0862">Zinc</keyword>
<proteinExistence type="evidence at protein level"/>
<comment type="function">
    <text evidence="1 4 5 6">Transcription factor that activates the genes for FRE1, FRE2 and FET3 in response to iron deprivationand thereby plays a central role in iron homeostasis (PubMed:7720713, PubMed:9200812). Also required for the expression of LSO1 (PubMed:26450372). Recognizes the consensus iron-responsive element (Fe-RE) sequence 5'-CACCC-3' in the promoters of target genes (By similarity). Iron could interact directly with AFT1 and inhibits its activity (PubMed:7720713). In high iron condition, the presence of Fe(2+) or [2Fe-2S] cluster leads to dimerization, which in turn leads to a decrease in DNA affinity (By similarity).</text>
</comment>
<comment type="activity regulation">
    <text evidence="1">Dimerization via the binding of Fe(2+) or a [2Fe-2S] cluster decreases the DNA-binding activity.</text>
</comment>
<comment type="subunit">
    <text evidence="1">Homodimer (By similarity). Dimerization decreases the DNA-binding activity (By similarity).</text>
</comment>
<comment type="interaction">
    <interactant intactId="EBI-2332">
        <id>P22149</id>
    </interactant>
    <interactant intactId="EBI-22178">
        <id>Q03835</id>
        <label>GRX3</label>
    </interactant>
    <organismsDiffer>false</organismsDiffer>
    <experiments>4</experiments>
</comment>
<comment type="interaction">
    <interactant intactId="EBI-2332">
        <id>P22149</id>
    </interactant>
    <interactant intactId="EBI-22211">
        <id>P32642</id>
        <label>GRX4</label>
    </interactant>
    <organismsDiffer>false</organismsDiffer>
    <experiments>3</experiments>
</comment>
<comment type="subcellular location">
    <subcellularLocation>
        <location evidence="8">Nucleus</location>
    </subcellularLocation>
</comment>
<comment type="domain">
    <text evidence="1">The CDC motif is involved in iron-sensong via binding to Fe(2+) or [2Fe-2S] cluster, which leads to dimerization and loss of DNA-binding.</text>
</comment>
<comment type="disruption phenotype">
    <text evidence="4">Two-fold reduction in expression of LSO1.</text>
</comment>
<comment type="miscellaneous">
    <text evidence="3">Present with 2730 molecules/cell in log phase SD medium.</text>
</comment>
<comment type="sequence caution" evidence="8">
    <conflict type="frameshift">
        <sequence resource="EMBL-CDS" id="CAA37215"/>
    </conflict>
</comment>
<comment type="sequence caution" evidence="8">
    <conflict type="frameshift">
        <sequence resource="EMBL-CDS" id="CAA54586"/>
    </conflict>
</comment>
<dbReference type="EMBL" id="Z48004">
    <property type="protein sequence ID" value="CAA88044.1"/>
    <property type="molecule type" value="mRNA"/>
</dbReference>
<dbReference type="EMBL" id="X77413">
    <property type="protein sequence ID" value="CAA54586.1"/>
    <property type="status" value="ALT_FRAME"/>
    <property type="molecule type" value="Genomic_DNA"/>
</dbReference>
<dbReference type="EMBL" id="Z72593">
    <property type="protein sequence ID" value="CAA96775.1"/>
    <property type="molecule type" value="Genomic_DNA"/>
</dbReference>
<dbReference type="EMBL" id="AY723805">
    <property type="protein sequence ID" value="AAU09722.1"/>
    <property type="molecule type" value="Genomic_DNA"/>
</dbReference>
<dbReference type="EMBL" id="X53046">
    <property type="protein sequence ID" value="CAA37215.1"/>
    <property type="status" value="ALT_FRAME"/>
    <property type="molecule type" value="Genomic_DNA"/>
</dbReference>
<dbReference type="EMBL" id="BK006941">
    <property type="protein sequence ID" value="DAA08032.1"/>
    <property type="molecule type" value="Genomic_DNA"/>
</dbReference>
<dbReference type="PIR" id="S54775">
    <property type="entry name" value="S54775"/>
</dbReference>
<dbReference type="RefSeq" id="NP_011444.1">
    <property type="nucleotide sequence ID" value="NM_001180936.1"/>
</dbReference>
<dbReference type="SMR" id="P22149"/>
<dbReference type="BioGRID" id="33177">
    <property type="interactions" value="325"/>
</dbReference>
<dbReference type="DIP" id="DIP-1351N"/>
<dbReference type="FunCoup" id="P22149">
    <property type="interactions" value="1623"/>
</dbReference>
<dbReference type="IntAct" id="P22149">
    <property type="interactions" value="64"/>
</dbReference>
<dbReference type="MINT" id="P22149"/>
<dbReference type="STRING" id="4932.YGL071W"/>
<dbReference type="iPTMnet" id="P22149"/>
<dbReference type="PaxDb" id="4932-YGL071W"/>
<dbReference type="PeptideAtlas" id="P22149"/>
<dbReference type="EnsemblFungi" id="YGL071W_mRNA">
    <property type="protein sequence ID" value="YGL071W"/>
    <property type="gene ID" value="YGL071W"/>
</dbReference>
<dbReference type="GeneID" id="852809"/>
<dbReference type="KEGG" id="sce:YGL071W"/>
<dbReference type="AGR" id="SGD:S000003039"/>
<dbReference type="SGD" id="S000003039">
    <property type="gene designation" value="AFT1"/>
</dbReference>
<dbReference type="VEuPathDB" id="FungiDB:YGL071W"/>
<dbReference type="eggNOG" id="KOG4818">
    <property type="taxonomic scope" value="Eukaryota"/>
</dbReference>
<dbReference type="GeneTree" id="ENSGT00940000176694"/>
<dbReference type="HOGENOM" id="CLU_025287_0_0_1"/>
<dbReference type="InParanoid" id="P22149"/>
<dbReference type="OMA" id="EHNEYIL"/>
<dbReference type="OrthoDB" id="4068596at2759"/>
<dbReference type="BioCyc" id="YEAST:G3O-30574-MONOMER"/>
<dbReference type="BioGRID-ORCS" id="852809">
    <property type="hits" value="5 hits in 13 CRISPR screens"/>
</dbReference>
<dbReference type="PRO" id="PR:P22149"/>
<dbReference type="Proteomes" id="UP000002311">
    <property type="component" value="Chromosome VII"/>
</dbReference>
<dbReference type="RNAct" id="P22149">
    <property type="molecule type" value="protein"/>
</dbReference>
<dbReference type="GO" id="GO:0005737">
    <property type="term" value="C:cytoplasm"/>
    <property type="evidence" value="ECO:0000314"/>
    <property type="project" value="SGD"/>
</dbReference>
<dbReference type="GO" id="GO:0005634">
    <property type="term" value="C:nucleus"/>
    <property type="evidence" value="ECO:0000314"/>
    <property type="project" value="SGD"/>
</dbReference>
<dbReference type="GO" id="GO:0000987">
    <property type="term" value="F:cis-regulatory region sequence-specific DNA binding"/>
    <property type="evidence" value="ECO:0000314"/>
    <property type="project" value="SGD"/>
</dbReference>
<dbReference type="GO" id="GO:0000981">
    <property type="term" value="F:DNA-binding transcription factor activity, RNA polymerase II-specific"/>
    <property type="evidence" value="ECO:0000314"/>
    <property type="project" value="SGD"/>
</dbReference>
<dbReference type="GO" id="GO:0043515">
    <property type="term" value="F:kinetochore binding"/>
    <property type="evidence" value="ECO:0000314"/>
    <property type="project" value="SGD"/>
</dbReference>
<dbReference type="GO" id="GO:0046872">
    <property type="term" value="F:metal ion binding"/>
    <property type="evidence" value="ECO:0007669"/>
    <property type="project" value="UniProtKB-KW"/>
</dbReference>
<dbReference type="GO" id="GO:0032048">
    <property type="term" value="P:cardiolipin metabolic process"/>
    <property type="evidence" value="ECO:0000315"/>
    <property type="project" value="SGD"/>
</dbReference>
<dbReference type="GO" id="GO:0010106">
    <property type="term" value="P:cellular response to iron ion starvation"/>
    <property type="evidence" value="ECO:0000315"/>
    <property type="project" value="SGD"/>
</dbReference>
<dbReference type="GO" id="GO:0007059">
    <property type="term" value="P:chromosome segregation"/>
    <property type="evidence" value="ECO:0000315"/>
    <property type="project" value="SGD"/>
</dbReference>
<dbReference type="GO" id="GO:0034087">
    <property type="term" value="P:establishment of mitotic sister chromatid cohesion"/>
    <property type="evidence" value="ECO:0000315"/>
    <property type="project" value="SGD"/>
</dbReference>
<dbReference type="GO" id="GO:0045132">
    <property type="term" value="P:meiotic chromosome segregation"/>
    <property type="evidence" value="ECO:0000315"/>
    <property type="project" value="SGD"/>
</dbReference>
<dbReference type="GO" id="GO:0000122">
    <property type="term" value="P:negative regulation of transcription by RNA polymerase II"/>
    <property type="evidence" value="ECO:0000315"/>
    <property type="project" value="SGD"/>
</dbReference>
<dbReference type="GO" id="GO:0034758">
    <property type="term" value="P:positive regulation of iron ion transport"/>
    <property type="evidence" value="ECO:0000315"/>
    <property type="project" value="SGD"/>
</dbReference>
<dbReference type="GO" id="GO:0045944">
    <property type="term" value="P:positive regulation of transcription by RNA polymerase II"/>
    <property type="evidence" value="ECO:0000314"/>
    <property type="project" value="SGD"/>
</dbReference>
<dbReference type="InterPro" id="IPR014842">
    <property type="entry name" value="AFT"/>
</dbReference>
<dbReference type="Pfam" id="PF08731">
    <property type="entry name" value="AFT"/>
    <property type="match status" value="1"/>
</dbReference>
<evidence type="ECO:0000250" key="1">
    <source>
        <dbReference type="UniProtKB" id="Q08957"/>
    </source>
</evidence>
<evidence type="ECO:0000256" key="2">
    <source>
        <dbReference type="SAM" id="MobiDB-lite"/>
    </source>
</evidence>
<evidence type="ECO:0000269" key="3">
    <source>
    </source>
</evidence>
<evidence type="ECO:0000269" key="4">
    <source>
    </source>
</evidence>
<evidence type="ECO:0000269" key="5">
    <source>
    </source>
</evidence>
<evidence type="ECO:0000269" key="6">
    <source>
    </source>
</evidence>
<evidence type="ECO:0000303" key="7">
    <source>
    </source>
</evidence>
<evidence type="ECO:0000305" key="8"/>